<keyword id="KW-0067">ATP-binding</keyword>
<keyword id="KW-0436">Ligase</keyword>
<keyword id="KW-0547">Nucleotide-binding</keyword>
<keyword id="KW-0648">Protein biosynthesis</keyword>
<keyword id="KW-1185">Reference proteome</keyword>
<dbReference type="EC" id="6.3.5.-"/>
<dbReference type="EMBL" id="AE000666">
    <property type="protein sequence ID" value="AAB85762.1"/>
    <property type="molecule type" value="Genomic_DNA"/>
</dbReference>
<dbReference type="PIR" id="D69037">
    <property type="entry name" value="D69037"/>
</dbReference>
<dbReference type="RefSeq" id="WP_010876897.1">
    <property type="nucleotide sequence ID" value="NC_000916.1"/>
</dbReference>
<dbReference type="SMR" id="O27341"/>
<dbReference type="FunCoup" id="O27341">
    <property type="interactions" value="145"/>
</dbReference>
<dbReference type="STRING" id="187420.MTH_1280"/>
<dbReference type="PaxDb" id="187420-MTH_1280"/>
<dbReference type="EnsemblBacteria" id="AAB85762">
    <property type="protein sequence ID" value="AAB85762"/>
    <property type="gene ID" value="MTH_1280"/>
</dbReference>
<dbReference type="GeneID" id="77403687"/>
<dbReference type="KEGG" id="mth:MTH_1280"/>
<dbReference type="PATRIC" id="fig|187420.15.peg.1252"/>
<dbReference type="HOGENOM" id="CLU_019240_0_1_2"/>
<dbReference type="InParanoid" id="O27341"/>
<dbReference type="Proteomes" id="UP000005223">
    <property type="component" value="Chromosome"/>
</dbReference>
<dbReference type="GO" id="GO:0050566">
    <property type="term" value="F:asparaginyl-tRNA synthase (glutamine-hydrolyzing) activity"/>
    <property type="evidence" value="ECO:0007669"/>
    <property type="project" value="RHEA"/>
</dbReference>
<dbReference type="GO" id="GO:0005524">
    <property type="term" value="F:ATP binding"/>
    <property type="evidence" value="ECO:0007669"/>
    <property type="project" value="UniProtKB-KW"/>
</dbReference>
<dbReference type="GO" id="GO:0050567">
    <property type="term" value="F:glutaminyl-tRNA synthase (glutamine-hydrolyzing) activity"/>
    <property type="evidence" value="ECO:0007669"/>
    <property type="project" value="UniProtKB-UniRule"/>
</dbReference>
<dbReference type="GO" id="GO:0070681">
    <property type="term" value="P:glutaminyl-tRNAGln biosynthesis via transamidation"/>
    <property type="evidence" value="ECO:0007669"/>
    <property type="project" value="TreeGrafter"/>
</dbReference>
<dbReference type="GO" id="GO:0006412">
    <property type="term" value="P:translation"/>
    <property type="evidence" value="ECO:0007669"/>
    <property type="project" value="UniProtKB-UniRule"/>
</dbReference>
<dbReference type="FunFam" id="1.10.10.410:FF:000001">
    <property type="entry name" value="Aspartyl/glutamyl-tRNA(Asn/Gln) amidotransferase subunit B"/>
    <property type="match status" value="1"/>
</dbReference>
<dbReference type="Gene3D" id="1.10.10.410">
    <property type="match status" value="1"/>
</dbReference>
<dbReference type="Gene3D" id="1.10.150.380">
    <property type="entry name" value="GatB domain, N-terminal subdomain"/>
    <property type="match status" value="1"/>
</dbReference>
<dbReference type="HAMAP" id="MF_00121">
    <property type="entry name" value="GatB"/>
    <property type="match status" value="1"/>
</dbReference>
<dbReference type="InterPro" id="IPR017959">
    <property type="entry name" value="Asn/Gln-tRNA_amidoTrfase_suB/E"/>
</dbReference>
<dbReference type="InterPro" id="IPR006075">
    <property type="entry name" value="Asn/Gln-tRNA_Trfase_suB/E_cat"/>
</dbReference>
<dbReference type="InterPro" id="IPR018027">
    <property type="entry name" value="Asn/Gln_amidotransferase"/>
</dbReference>
<dbReference type="InterPro" id="IPR003789">
    <property type="entry name" value="Asn/Gln_tRNA_amidoTrase-B-like"/>
</dbReference>
<dbReference type="InterPro" id="IPR004413">
    <property type="entry name" value="GatB"/>
</dbReference>
<dbReference type="InterPro" id="IPR042114">
    <property type="entry name" value="GatB_C_1"/>
</dbReference>
<dbReference type="InterPro" id="IPR023168">
    <property type="entry name" value="GatB_Yqey_C_2"/>
</dbReference>
<dbReference type="InterPro" id="IPR017958">
    <property type="entry name" value="Gln-tRNA_amidoTrfase_suB_CS"/>
</dbReference>
<dbReference type="InterPro" id="IPR014746">
    <property type="entry name" value="Gln_synth/guanido_kin_cat_dom"/>
</dbReference>
<dbReference type="NCBIfam" id="TIGR00133">
    <property type="entry name" value="gatB"/>
    <property type="match status" value="1"/>
</dbReference>
<dbReference type="NCBIfam" id="NF004012">
    <property type="entry name" value="PRK05477.1-2"/>
    <property type="match status" value="1"/>
</dbReference>
<dbReference type="NCBIfam" id="NF004014">
    <property type="entry name" value="PRK05477.1-4"/>
    <property type="match status" value="1"/>
</dbReference>
<dbReference type="PANTHER" id="PTHR11659">
    <property type="entry name" value="GLUTAMYL-TRNA GLN AMIDOTRANSFERASE SUBUNIT B MITOCHONDRIAL AND PROKARYOTIC PET112-RELATED"/>
    <property type="match status" value="1"/>
</dbReference>
<dbReference type="PANTHER" id="PTHR11659:SF0">
    <property type="entry name" value="GLUTAMYL-TRNA(GLN) AMIDOTRANSFERASE SUBUNIT B, MITOCHONDRIAL"/>
    <property type="match status" value="1"/>
</dbReference>
<dbReference type="Pfam" id="PF02934">
    <property type="entry name" value="GatB_N"/>
    <property type="match status" value="1"/>
</dbReference>
<dbReference type="Pfam" id="PF02637">
    <property type="entry name" value="GatB_Yqey"/>
    <property type="match status" value="1"/>
</dbReference>
<dbReference type="SMART" id="SM00845">
    <property type="entry name" value="GatB_Yqey"/>
    <property type="match status" value="1"/>
</dbReference>
<dbReference type="SUPFAM" id="SSF89095">
    <property type="entry name" value="GatB/YqeY motif"/>
    <property type="match status" value="1"/>
</dbReference>
<dbReference type="SUPFAM" id="SSF55931">
    <property type="entry name" value="Glutamine synthetase/guanido kinase"/>
    <property type="match status" value="1"/>
</dbReference>
<dbReference type="PROSITE" id="PS01234">
    <property type="entry name" value="GATB"/>
    <property type="match status" value="1"/>
</dbReference>
<protein>
    <recommendedName>
        <fullName>Aspartyl/glutamyl-tRNA(Asn/Gln) amidotransferase subunit B</fullName>
        <shortName>Asp/Glu-ADT subunit B</shortName>
        <ecNumber>6.3.5.-</ecNumber>
    </recommendedName>
</protein>
<organism>
    <name type="scientific">Methanothermobacter thermautotrophicus (strain ATCC 29096 / DSM 1053 / JCM 10044 / NBRC 100330 / Delta H)</name>
    <name type="common">Methanobacterium thermoautotrophicum</name>
    <dbReference type="NCBI Taxonomy" id="187420"/>
    <lineage>
        <taxon>Archaea</taxon>
        <taxon>Methanobacteriati</taxon>
        <taxon>Methanobacteriota</taxon>
        <taxon>Methanomada group</taxon>
        <taxon>Methanobacteria</taxon>
        <taxon>Methanobacteriales</taxon>
        <taxon>Methanobacteriaceae</taxon>
        <taxon>Methanothermobacter</taxon>
    </lineage>
</organism>
<sequence>MKCGLEIHVQLDTRSKLFCRCPTDYQEAPPNTNICPVCLNQPGAKPYPPNRSALEGALKIALMLDCRINPEITYFMRKHYNYPDLPSGYQRTSIPVGLEGELNGVRIREVHIEEDPGQYKPDQGTVDFNRSGIPLIEIVTEPDMTSPEEARNFLRELIRVLEYSGCARGEGTMRADVNISLEGGKRVEIKNINSIKGAYKALKFEMIRQKNLLKRGVEVKQETRAFLESQMITVSMRLKEEAEDYRYIPDPDLPPMKFTDEVVEGLRERIPEAPHLKVKRFMEEYGLREEDARVLTSELELADAFEEVAGSIDPEFAALWMRDELKRVLYYNKISFAESMITPGDIIELLAMIRKKEITSKAAKKIIEEMPLNKKGPREIATEMGLIGIIDESEVIRAVEQAIRENPGAVEDYHAGKEAAINFLVGQVMRMTRGKAEPERTVELIKERI</sequence>
<proteinExistence type="evidence at protein level"/>
<comment type="function">
    <text>Allows the formation of correctly charged Asn-tRNA(Asn) or Gln-tRNA(Gln) through the transamidation of misacylated Asp-tRNA(Asn) or Glu-tRNA(Gln) in organisms which lack either or both of asparaginyl-tRNA or glutaminyl-tRNA synthetases. The reaction takes place in the presence of glutamine and ATP through an activated phospho-Asp-tRNA(Asn) or phospho-Glu-tRNA(Gln).</text>
</comment>
<comment type="catalytic activity">
    <reaction>
        <text>L-glutamyl-tRNA(Gln) + L-glutamine + ATP + H2O = L-glutaminyl-tRNA(Gln) + L-glutamate + ADP + phosphate + H(+)</text>
        <dbReference type="Rhea" id="RHEA:17521"/>
        <dbReference type="Rhea" id="RHEA-COMP:9681"/>
        <dbReference type="Rhea" id="RHEA-COMP:9684"/>
        <dbReference type="ChEBI" id="CHEBI:15377"/>
        <dbReference type="ChEBI" id="CHEBI:15378"/>
        <dbReference type="ChEBI" id="CHEBI:29985"/>
        <dbReference type="ChEBI" id="CHEBI:30616"/>
        <dbReference type="ChEBI" id="CHEBI:43474"/>
        <dbReference type="ChEBI" id="CHEBI:58359"/>
        <dbReference type="ChEBI" id="CHEBI:78520"/>
        <dbReference type="ChEBI" id="CHEBI:78521"/>
        <dbReference type="ChEBI" id="CHEBI:456216"/>
    </reaction>
</comment>
<comment type="catalytic activity">
    <reaction>
        <text>L-aspartyl-tRNA(Asn) + L-glutamine + ATP + H2O = L-asparaginyl-tRNA(Asn) + L-glutamate + ADP + phosphate + 2 H(+)</text>
        <dbReference type="Rhea" id="RHEA:14513"/>
        <dbReference type="Rhea" id="RHEA-COMP:9674"/>
        <dbReference type="Rhea" id="RHEA-COMP:9677"/>
        <dbReference type="ChEBI" id="CHEBI:15377"/>
        <dbReference type="ChEBI" id="CHEBI:15378"/>
        <dbReference type="ChEBI" id="CHEBI:29985"/>
        <dbReference type="ChEBI" id="CHEBI:30616"/>
        <dbReference type="ChEBI" id="CHEBI:43474"/>
        <dbReference type="ChEBI" id="CHEBI:58359"/>
        <dbReference type="ChEBI" id="CHEBI:78515"/>
        <dbReference type="ChEBI" id="CHEBI:78516"/>
        <dbReference type="ChEBI" id="CHEBI:456216"/>
    </reaction>
</comment>
<comment type="subunit">
    <text>Heterotrimer of A, B and C subunits.</text>
</comment>
<comment type="similarity">
    <text evidence="1">Belongs to the GatB/GatE family. GatB subfamily.</text>
</comment>
<feature type="chain" id="PRO_0000148875" description="Aspartyl/glutamyl-tRNA(Asn/Gln) amidotransferase subunit B">
    <location>
        <begin position="1"/>
        <end position="449"/>
    </location>
</feature>
<name>GATB_METTH</name>
<reference key="1">
    <citation type="journal article" date="1997" name="J. Bacteriol.">
        <title>Complete genome sequence of Methanobacterium thermoautotrophicum deltaH: functional analysis and comparative genomics.</title>
        <authorList>
            <person name="Smith D.R."/>
            <person name="Doucette-Stamm L.A."/>
            <person name="Deloughery C."/>
            <person name="Lee H.-M."/>
            <person name="Dubois J."/>
            <person name="Aldredge T."/>
            <person name="Bashirzadeh R."/>
            <person name="Blakely D."/>
            <person name="Cook R."/>
            <person name="Gilbert K."/>
            <person name="Harrison D."/>
            <person name="Hoang L."/>
            <person name="Keagle P."/>
            <person name="Lumm W."/>
            <person name="Pothier B."/>
            <person name="Qiu D."/>
            <person name="Spadafora R."/>
            <person name="Vicare R."/>
            <person name="Wang Y."/>
            <person name="Wierzbowski J."/>
            <person name="Gibson R."/>
            <person name="Jiwani N."/>
            <person name="Caruso A."/>
            <person name="Bush D."/>
            <person name="Safer H."/>
            <person name="Patwell D."/>
            <person name="Prabhakar S."/>
            <person name="McDougall S."/>
            <person name="Shimer G."/>
            <person name="Goyal A."/>
            <person name="Pietrovski S."/>
            <person name="Church G.M."/>
            <person name="Daniels C.J."/>
            <person name="Mao J.-I."/>
            <person name="Rice P."/>
            <person name="Noelling J."/>
            <person name="Reeve J.N."/>
        </authorList>
    </citation>
    <scope>NUCLEOTIDE SEQUENCE [LARGE SCALE GENOMIC DNA]</scope>
    <source>
        <strain>ATCC 29096 / DSM 1053 / JCM 10044 / NBRC 100330 / Delta H</strain>
    </source>
</reference>
<reference key="2">
    <citation type="journal article" date="2000" name="Nature">
        <title>Domain-specific recruitment of amide amino acids for protein synthesis.</title>
        <authorList>
            <person name="Tumbula D.L."/>
            <person name="Becker H.D."/>
            <person name="Chang W.-Z."/>
            <person name="Soell D."/>
        </authorList>
    </citation>
    <scope>CHARACTERIZATION</scope>
    <source>
        <strain>ATCC 29096 / DSM 1053 / JCM 10044 / NBRC 100330 / Delta H</strain>
    </source>
</reference>
<accession>O27341</accession>
<evidence type="ECO:0000305" key="1"/>
<gene>
    <name type="primary">gatB</name>
    <name type="ordered locus">MTH_1280</name>
</gene>